<dbReference type="EMBL" id="CP000627">
    <property type="protein sequence ID" value="ABQ21614.1"/>
    <property type="molecule type" value="Genomic_DNA"/>
</dbReference>
<dbReference type="EMBL" id="CP001235">
    <property type="protein sequence ID" value="ACP10692.1"/>
    <property type="molecule type" value="Genomic_DNA"/>
</dbReference>
<dbReference type="RefSeq" id="WP_001018908.1">
    <property type="nucleotide sequence ID" value="NZ_JAACZH010000007.1"/>
</dbReference>
<dbReference type="SMR" id="A5F546"/>
<dbReference type="GeneID" id="89513430"/>
<dbReference type="KEGG" id="vco:VC0395_A2171"/>
<dbReference type="KEGG" id="vcr:VC395_2706"/>
<dbReference type="PATRIC" id="fig|345073.21.peg.2606"/>
<dbReference type="eggNOG" id="COG0090">
    <property type="taxonomic scope" value="Bacteria"/>
</dbReference>
<dbReference type="HOGENOM" id="CLU_036235_2_1_6"/>
<dbReference type="OrthoDB" id="9778722at2"/>
<dbReference type="Proteomes" id="UP000000249">
    <property type="component" value="Chromosome 2"/>
</dbReference>
<dbReference type="GO" id="GO:0015934">
    <property type="term" value="C:large ribosomal subunit"/>
    <property type="evidence" value="ECO:0007669"/>
    <property type="project" value="InterPro"/>
</dbReference>
<dbReference type="GO" id="GO:0019843">
    <property type="term" value="F:rRNA binding"/>
    <property type="evidence" value="ECO:0007669"/>
    <property type="project" value="UniProtKB-UniRule"/>
</dbReference>
<dbReference type="GO" id="GO:0003735">
    <property type="term" value="F:structural constituent of ribosome"/>
    <property type="evidence" value="ECO:0007669"/>
    <property type="project" value="InterPro"/>
</dbReference>
<dbReference type="GO" id="GO:0016740">
    <property type="term" value="F:transferase activity"/>
    <property type="evidence" value="ECO:0007669"/>
    <property type="project" value="InterPro"/>
</dbReference>
<dbReference type="GO" id="GO:0002181">
    <property type="term" value="P:cytoplasmic translation"/>
    <property type="evidence" value="ECO:0007669"/>
    <property type="project" value="TreeGrafter"/>
</dbReference>
<dbReference type="FunFam" id="2.30.30.30:FF:000001">
    <property type="entry name" value="50S ribosomal protein L2"/>
    <property type="match status" value="1"/>
</dbReference>
<dbReference type="FunFam" id="2.40.50.140:FF:000003">
    <property type="entry name" value="50S ribosomal protein L2"/>
    <property type="match status" value="1"/>
</dbReference>
<dbReference type="FunFam" id="4.10.950.10:FF:000001">
    <property type="entry name" value="50S ribosomal protein L2"/>
    <property type="match status" value="1"/>
</dbReference>
<dbReference type="Gene3D" id="2.30.30.30">
    <property type="match status" value="1"/>
</dbReference>
<dbReference type="Gene3D" id="2.40.50.140">
    <property type="entry name" value="Nucleic acid-binding proteins"/>
    <property type="match status" value="1"/>
</dbReference>
<dbReference type="Gene3D" id="4.10.950.10">
    <property type="entry name" value="Ribosomal protein L2, domain 3"/>
    <property type="match status" value="1"/>
</dbReference>
<dbReference type="HAMAP" id="MF_01320_B">
    <property type="entry name" value="Ribosomal_uL2_B"/>
    <property type="match status" value="1"/>
</dbReference>
<dbReference type="InterPro" id="IPR012340">
    <property type="entry name" value="NA-bd_OB-fold"/>
</dbReference>
<dbReference type="InterPro" id="IPR014722">
    <property type="entry name" value="Rib_uL2_dom2"/>
</dbReference>
<dbReference type="InterPro" id="IPR002171">
    <property type="entry name" value="Ribosomal_uL2"/>
</dbReference>
<dbReference type="InterPro" id="IPR005880">
    <property type="entry name" value="Ribosomal_uL2_bac/org-type"/>
</dbReference>
<dbReference type="InterPro" id="IPR022669">
    <property type="entry name" value="Ribosomal_uL2_C"/>
</dbReference>
<dbReference type="InterPro" id="IPR022671">
    <property type="entry name" value="Ribosomal_uL2_CS"/>
</dbReference>
<dbReference type="InterPro" id="IPR014726">
    <property type="entry name" value="Ribosomal_uL2_dom3"/>
</dbReference>
<dbReference type="InterPro" id="IPR022666">
    <property type="entry name" value="Ribosomal_uL2_RNA-bd_dom"/>
</dbReference>
<dbReference type="InterPro" id="IPR008991">
    <property type="entry name" value="Translation_prot_SH3-like_sf"/>
</dbReference>
<dbReference type="NCBIfam" id="TIGR01171">
    <property type="entry name" value="rplB_bact"/>
    <property type="match status" value="1"/>
</dbReference>
<dbReference type="PANTHER" id="PTHR13691:SF5">
    <property type="entry name" value="LARGE RIBOSOMAL SUBUNIT PROTEIN UL2M"/>
    <property type="match status" value="1"/>
</dbReference>
<dbReference type="PANTHER" id="PTHR13691">
    <property type="entry name" value="RIBOSOMAL PROTEIN L2"/>
    <property type="match status" value="1"/>
</dbReference>
<dbReference type="Pfam" id="PF00181">
    <property type="entry name" value="Ribosomal_L2"/>
    <property type="match status" value="1"/>
</dbReference>
<dbReference type="Pfam" id="PF03947">
    <property type="entry name" value="Ribosomal_L2_C"/>
    <property type="match status" value="1"/>
</dbReference>
<dbReference type="PIRSF" id="PIRSF002158">
    <property type="entry name" value="Ribosomal_L2"/>
    <property type="match status" value="1"/>
</dbReference>
<dbReference type="SMART" id="SM01383">
    <property type="entry name" value="Ribosomal_L2"/>
    <property type="match status" value="1"/>
</dbReference>
<dbReference type="SMART" id="SM01382">
    <property type="entry name" value="Ribosomal_L2_C"/>
    <property type="match status" value="1"/>
</dbReference>
<dbReference type="SUPFAM" id="SSF50249">
    <property type="entry name" value="Nucleic acid-binding proteins"/>
    <property type="match status" value="1"/>
</dbReference>
<dbReference type="SUPFAM" id="SSF50104">
    <property type="entry name" value="Translation proteins SH3-like domain"/>
    <property type="match status" value="1"/>
</dbReference>
<dbReference type="PROSITE" id="PS00467">
    <property type="entry name" value="RIBOSOMAL_L2"/>
    <property type="match status" value="1"/>
</dbReference>
<name>RL2_VIBC3</name>
<proteinExistence type="inferred from homology"/>
<protein>
    <recommendedName>
        <fullName evidence="1">Large ribosomal subunit protein uL2</fullName>
    </recommendedName>
    <alternativeName>
        <fullName evidence="3">50S ribosomal protein L2</fullName>
    </alternativeName>
</protein>
<accession>A5F546</accession>
<accession>C3LXJ2</accession>
<reference key="1">
    <citation type="submission" date="2007-03" db="EMBL/GenBank/DDBJ databases">
        <authorList>
            <person name="Heidelberg J."/>
        </authorList>
    </citation>
    <scope>NUCLEOTIDE SEQUENCE [LARGE SCALE GENOMIC DNA]</scope>
    <source>
        <strain>ATCC 39541 / Classical Ogawa 395 / O395</strain>
    </source>
</reference>
<reference key="2">
    <citation type="journal article" date="2008" name="PLoS ONE">
        <title>A recalibrated molecular clock and independent origins for the cholera pandemic clones.</title>
        <authorList>
            <person name="Feng L."/>
            <person name="Reeves P.R."/>
            <person name="Lan R."/>
            <person name="Ren Y."/>
            <person name="Gao C."/>
            <person name="Zhou Z."/>
            <person name="Ren Y."/>
            <person name="Cheng J."/>
            <person name="Wang W."/>
            <person name="Wang J."/>
            <person name="Qian W."/>
            <person name="Li D."/>
            <person name="Wang L."/>
        </authorList>
    </citation>
    <scope>NUCLEOTIDE SEQUENCE [LARGE SCALE GENOMIC DNA]</scope>
    <source>
        <strain>ATCC 39541 / Classical Ogawa 395 / O395</strain>
    </source>
</reference>
<evidence type="ECO:0000255" key="1">
    <source>
        <dbReference type="HAMAP-Rule" id="MF_01320"/>
    </source>
</evidence>
<evidence type="ECO:0000256" key="2">
    <source>
        <dbReference type="SAM" id="MobiDB-lite"/>
    </source>
</evidence>
<evidence type="ECO:0000305" key="3"/>
<keyword id="KW-0687">Ribonucleoprotein</keyword>
<keyword id="KW-0689">Ribosomal protein</keyword>
<keyword id="KW-0694">RNA-binding</keyword>
<keyword id="KW-0699">rRNA-binding</keyword>
<gene>
    <name evidence="1" type="primary">rplB</name>
    <name type="ordered locus">VC0395_A2171</name>
    <name type="ordered locus">VC395_2706</name>
</gene>
<sequence>MAIVKCKPTSAGRRHVVKVVNADLHKGKPYAPLLEKNSKNGGRNNNGRITVRHIGGGHKQHYRLVDFKRTKDGIPAKVERLEYDPNRSANIALVLYADGERRYIIAPKGLQAGDVIQSGPDAPIKAGNAMPMRNIPVGSTIHNVELTPGKGAQLARSAGAYAQLVARDGAYVTLRLRSGEMRKVLSEGRATIGEVGNAEHMLRELGKAGAARWRGVRPTVRGVVMNPVDHPHGGGEGRTSGGRHPVSPWGVPTKGYKTRSNKRTDKYIVRRRNK</sequence>
<comment type="function">
    <text evidence="1">One of the primary rRNA binding proteins. Required for association of the 30S and 50S subunits to form the 70S ribosome, for tRNA binding and peptide bond formation. It has been suggested to have peptidyltransferase activity; this is somewhat controversial. Makes several contacts with the 16S rRNA in the 70S ribosome.</text>
</comment>
<comment type="subunit">
    <text evidence="1">Part of the 50S ribosomal subunit. Forms a bridge to the 30S subunit in the 70S ribosome.</text>
</comment>
<comment type="similarity">
    <text evidence="1">Belongs to the universal ribosomal protein uL2 family.</text>
</comment>
<feature type="chain" id="PRO_1000073235" description="Large ribosomal subunit protein uL2">
    <location>
        <begin position="1"/>
        <end position="274"/>
    </location>
</feature>
<feature type="region of interest" description="Disordered" evidence="2">
    <location>
        <begin position="223"/>
        <end position="274"/>
    </location>
</feature>
<organism>
    <name type="scientific">Vibrio cholerae serotype O1 (strain ATCC 39541 / Classical Ogawa 395 / O395)</name>
    <dbReference type="NCBI Taxonomy" id="345073"/>
    <lineage>
        <taxon>Bacteria</taxon>
        <taxon>Pseudomonadati</taxon>
        <taxon>Pseudomonadota</taxon>
        <taxon>Gammaproteobacteria</taxon>
        <taxon>Vibrionales</taxon>
        <taxon>Vibrionaceae</taxon>
        <taxon>Vibrio</taxon>
    </lineage>
</organism>